<sequence length="275" mass="30203">MAIKTYRPLTPTLRFQTKLVNEELTTDRPHKPLTKTKQRTGGRRNAGDITIWHRGGGHKRKLRLIDFKRDKSGVPATVATVEYDPNRSANIALLHYADGEKRYILHPVGLKVGQKVVSGPDADILVGNALPLRNIPAGTVVHNIELKPGKGAQMARSAGAQAQLVAKESDYALLKLPSGETRRVLVDCMATIGQVGNLDYENVAIGKAGRTRWMGVRPTNRGVVMNPVDHPHGGGEGKTSGGRHPVTPWGQPTRGYKTRNNKRTDKFIVTRRGKR</sequence>
<keyword id="KW-1185">Reference proteome</keyword>
<keyword id="KW-0687">Ribonucleoprotein</keyword>
<keyword id="KW-0689">Ribosomal protein</keyword>
<keyword id="KW-0694">RNA-binding</keyword>
<keyword id="KW-0699">rRNA-binding</keyword>
<feature type="chain" id="PRO_0000309857" description="Large ribosomal subunit protein uL2">
    <location>
        <begin position="1"/>
        <end position="275"/>
    </location>
</feature>
<feature type="region of interest" description="Disordered" evidence="2">
    <location>
        <begin position="24"/>
        <end position="48"/>
    </location>
</feature>
<feature type="region of interest" description="Disordered" evidence="2">
    <location>
        <begin position="224"/>
        <end position="264"/>
    </location>
</feature>
<feature type="compositionally biased region" description="Basic residues" evidence="2">
    <location>
        <begin position="31"/>
        <end position="42"/>
    </location>
</feature>
<evidence type="ECO:0000255" key="1">
    <source>
        <dbReference type="HAMAP-Rule" id="MF_01320"/>
    </source>
</evidence>
<evidence type="ECO:0000256" key="2">
    <source>
        <dbReference type="SAM" id="MobiDB-lite"/>
    </source>
</evidence>
<evidence type="ECO:0000305" key="3"/>
<comment type="function">
    <text evidence="1">One of the primary rRNA binding proteins. Required for association of the 30S and 50S subunits to form the 70S ribosome, for tRNA binding and peptide bond formation. It has been suggested to have peptidyltransferase activity; this is somewhat controversial. Makes several contacts with the 16S rRNA in the 70S ribosome.</text>
</comment>
<comment type="subunit">
    <text evidence="1">Part of the 50S ribosomal subunit. Forms a bridge to the 30S subunit in the 70S ribosome.</text>
</comment>
<comment type="similarity">
    <text evidence="1">Belongs to the universal ribosomal protein uL2 family.</text>
</comment>
<accession>Q1ISB9</accession>
<protein>
    <recommendedName>
        <fullName evidence="1">Large ribosomal subunit protein uL2</fullName>
    </recommendedName>
    <alternativeName>
        <fullName evidence="3">50S ribosomal protein L2</fullName>
    </alternativeName>
</protein>
<organism>
    <name type="scientific">Koribacter versatilis (strain Ellin345)</name>
    <dbReference type="NCBI Taxonomy" id="204669"/>
    <lineage>
        <taxon>Bacteria</taxon>
        <taxon>Pseudomonadati</taxon>
        <taxon>Acidobacteriota</taxon>
        <taxon>Terriglobia</taxon>
        <taxon>Terriglobales</taxon>
        <taxon>Candidatus Korobacteraceae</taxon>
        <taxon>Candidatus Korobacter</taxon>
    </lineage>
</organism>
<proteinExistence type="inferred from homology"/>
<name>RL2_KORVE</name>
<reference key="1">
    <citation type="journal article" date="2009" name="Appl. Environ. Microbiol.">
        <title>Three genomes from the phylum Acidobacteria provide insight into the lifestyles of these microorganisms in soils.</title>
        <authorList>
            <person name="Ward N.L."/>
            <person name="Challacombe J.F."/>
            <person name="Janssen P.H."/>
            <person name="Henrissat B."/>
            <person name="Coutinho P.M."/>
            <person name="Wu M."/>
            <person name="Xie G."/>
            <person name="Haft D.H."/>
            <person name="Sait M."/>
            <person name="Badger J."/>
            <person name="Barabote R.D."/>
            <person name="Bradley B."/>
            <person name="Brettin T.S."/>
            <person name="Brinkac L.M."/>
            <person name="Bruce D."/>
            <person name="Creasy T."/>
            <person name="Daugherty S.C."/>
            <person name="Davidsen T.M."/>
            <person name="DeBoy R.T."/>
            <person name="Detter J.C."/>
            <person name="Dodson R.J."/>
            <person name="Durkin A.S."/>
            <person name="Ganapathy A."/>
            <person name="Gwinn-Giglio M."/>
            <person name="Han C.S."/>
            <person name="Khouri H."/>
            <person name="Kiss H."/>
            <person name="Kothari S.P."/>
            <person name="Madupu R."/>
            <person name="Nelson K.E."/>
            <person name="Nelson W.C."/>
            <person name="Paulsen I."/>
            <person name="Penn K."/>
            <person name="Ren Q."/>
            <person name="Rosovitz M.J."/>
            <person name="Selengut J.D."/>
            <person name="Shrivastava S."/>
            <person name="Sullivan S.A."/>
            <person name="Tapia R."/>
            <person name="Thompson L.S."/>
            <person name="Watkins K.L."/>
            <person name="Yang Q."/>
            <person name="Yu C."/>
            <person name="Zafar N."/>
            <person name="Zhou L."/>
            <person name="Kuske C.R."/>
        </authorList>
    </citation>
    <scope>NUCLEOTIDE SEQUENCE [LARGE SCALE GENOMIC DNA]</scope>
    <source>
        <strain>Ellin345</strain>
    </source>
</reference>
<dbReference type="EMBL" id="CP000360">
    <property type="protein sequence ID" value="ABF40231.1"/>
    <property type="molecule type" value="Genomic_DNA"/>
</dbReference>
<dbReference type="RefSeq" id="WP_011522033.1">
    <property type="nucleotide sequence ID" value="NC_008009.1"/>
</dbReference>
<dbReference type="SMR" id="Q1ISB9"/>
<dbReference type="STRING" id="204669.Acid345_1229"/>
<dbReference type="EnsemblBacteria" id="ABF40231">
    <property type="protein sequence ID" value="ABF40231"/>
    <property type="gene ID" value="Acid345_1229"/>
</dbReference>
<dbReference type="KEGG" id="aba:Acid345_1229"/>
<dbReference type="eggNOG" id="COG0090">
    <property type="taxonomic scope" value="Bacteria"/>
</dbReference>
<dbReference type="HOGENOM" id="CLU_036235_2_1_0"/>
<dbReference type="OrthoDB" id="9778722at2"/>
<dbReference type="Proteomes" id="UP000002432">
    <property type="component" value="Chromosome"/>
</dbReference>
<dbReference type="GO" id="GO:0015934">
    <property type="term" value="C:large ribosomal subunit"/>
    <property type="evidence" value="ECO:0007669"/>
    <property type="project" value="InterPro"/>
</dbReference>
<dbReference type="GO" id="GO:0019843">
    <property type="term" value="F:rRNA binding"/>
    <property type="evidence" value="ECO:0007669"/>
    <property type="project" value="UniProtKB-UniRule"/>
</dbReference>
<dbReference type="GO" id="GO:0003735">
    <property type="term" value="F:structural constituent of ribosome"/>
    <property type="evidence" value="ECO:0007669"/>
    <property type="project" value="InterPro"/>
</dbReference>
<dbReference type="GO" id="GO:0016740">
    <property type="term" value="F:transferase activity"/>
    <property type="evidence" value="ECO:0007669"/>
    <property type="project" value="InterPro"/>
</dbReference>
<dbReference type="GO" id="GO:0002181">
    <property type="term" value="P:cytoplasmic translation"/>
    <property type="evidence" value="ECO:0007669"/>
    <property type="project" value="TreeGrafter"/>
</dbReference>
<dbReference type="FunFam" id="2.30.30.30:FF:000001">
    <property type="entry name" value="50S ribosomal protein L2"/>
    <property type="match status" value="1"/>
</dbReference>
<dbReference type="FunFam" id="2.40.50.140:FF:000003">
    <property type="entry name" value="50S ribosomal protein L2"/>
    <property type="match status" value="1"/>
</dbReference>
<dbReference type="FunFam" id="4.10.950.10:FF:000001">
    <property type="entry name" value="50S ribosomal protein L2"/>
    <property type="match status" value="1"/>
</dbReference>
<dbReference type="Gene3D" id="2.30.30.30">
    <property type="match status" value="1"/>
</dbReference>
<dbReference type="Gene3D" id="2.40.50.140">
    <property type="entry name" value="Nucleic acid-binding proteins"/>
    <property type="match status" value="1"/>
</dbReference>
<dbReference type="Gene3D" id="4.10.950.10">
    <property type="entry name" value="Ribosomal protein L2, domain 3"/>
    <property type="match status" value="1"/>
</dbReference>
<dbReference type="HAMAP" id="MF_01320_B">
    <property type="entry name" value="Ribosomal_uL2_B"/>
    <property type="match status" value="1"/>
</dbReference>
<dbReference type="InterPro" id="IPR012340">
    <property type="entry name" value="NA-bd_OB-fold"/>
</dbReference>
<dbReference type="InterPro" id="IPR014722">
    <property type="entry name" value="Rib_uL2_dom2"/>
</dbReference>
<dbReference type="InterPro" id="IPR002171">
    <property type="entry name" value="Ribosomal_uL2"/>
</dbReference>
<dbReference type="InterPro" id="IPR005880">
    <property type="entry name" value="Ribosomal_uL2_bac/org-type"/>
</dbReference>
<dbReference type="InterPro" id="IPR022669">
    <property type="entry name" value="Ribosomal_uL2_C"/>
</dbReference>
<dbReference type="InterPro" id="IPR022671">
    <property type="entry name" value="Ribosomal_uL2_CS"/>
</dbReference>
<dbReference type="InterPro" id="IPR014726">
    <property type="entry name" value="Ribosomal_uL2_dom3"/>
</dbReference>
<dbReference type="InterPro" id="IPR022666">
    <property type="entry name" value="Ribosomal_uL2_RNA-bd_dom"/>
</dbReference>
<dbReference type="InterPro" id="IPR008991">
    <property type="entry name" value="Translation_prot_SH3-like_sf"/>
</dbReference>
<dbReference type="NCBIfam" id="TIGR01171">
    <property type="entry name" value="rplB_bact"/>
    <property type="match status" value="1"/>
</dbReference>
<dbReference type="PANTHER" id="PTHR13691:SF5">
    <property type="entry name" value="LARGE RIBOSOMAL SUBUNIT PROTEIN UL2M"/>
    <property type="match status" value="1"/>
</dbReference>
<dbReference type="PANTHER" id="PTHR13691">
    <property type="entry name" value="RIBOSOMAL PROTEIN L2"/>
    <property type="match status" value="1"/>
</dbReference>
<dbReference type="Pfam" id="PF00181">
    <property type="entry name" value="Ribosomal_L2"/>
    <property type="match status" value="1"/>
</dbReference>
<dbReference type="Pfam" id="PF03947">
    <property type="entry name" value="Ribosomal_L2_C"/>
    <property type="match status" value="1"/>
</dbReference>
<dbReference type="PIRSF" id="PIRSF002158">
    <property type="entry name" value="Ribosomal_L2"/>
    <property type="match status" value="1"/>
</dbReference>
<dbReference type="SMART" id="SM01383">
    <property type="entry name" value="Ribosomal_L2"/>
    <property type="match status" value="1"/>
</dbReference>
<dbReference type="SMART" id="SM01382">
    <property type="entry name" value="Ribosomal_L2_C"/>
    <property type="match status" value="1"/>
</dbReference>
<dbReference type="SUPFAM" id="SSF50249">
    <property type="entry name" value="Nucleic acid-binding proteins"/>
    <property type="match status" value="1"/>
</dbReference>
<dbReference type="SUPFAM" id="SSF50104">
    <property type="entry name" value="Translation proteins SH3-like domain"/>
    <property type="match status" value="1"/>
</dbReference>
<dbReference type="PROSITE" id="PS00467">
    <property type="entry name" value="RIBOSOMAL_L2"/>
    <property type="match status" value="1"/>
</dbReference>
<gene>
    <name evidence="1" type="primary">rplB</name>
    <name type="ordered locus">Acid345_1229</name>
</gene>